<name>SYFB_STRPN</name>
<organism>
    <name type="scientific">Streptococcus pneumoniae serotype 4 (strain ATCC BAA-334 / TIGR4)</name>
    <dbReference type="NCBI Taxonomy" id="170187"/>
    <lineage>
        <taxon>Bacteria</taxon>
        <taxon>Bacillati</taxon>
        <taxon>Bacillota</taxon>
        <taxon>Bacilli</taxon>
        <taxon>Lactobacillales</taxon>
        <taxon>Streptococcaceae</taxon>
        <taxon>Streptococcus</taxon>
    </lineage>
</organism>
<evidence type="ECO:0000255" key="1">
    <source>
        <dbReference type="HAMAP-Rule" id="MF_00283"/>
    </source>
</evidence>
<sequence length="801" mass="87157">MLVSYKWLKELVDIDVPSQELAEKMSTTGIEVEGVESPAAGLSKIVVGEVLSCEDVPETHLHVCQINVGEEEERQIVCGAPNVRAGIKVMVALPGARIADNYKIKKGKIRGLESLGMICSLGELGISDSVVPKEFADGIQILPEDAVPGEEVFSYLDLDDEIIELSITPNRADALSMCGVAHEVAAIYDKAVNFKKFTLTETNEAAADALSVSIETDKAPYYAARILDNVTIAPSPQWLQNLLMNEGIRPINNVVDVTNYILLYFGQPMHAFDLDTFEGTDIRVREARDGEKLVTLDGEERDLAETDLVITVADKPVALAGVMGGQATEISEKSSRVILEAAVFNGKSIRKTSGRLNLRSESSSRFEKGINVATVNEALDAAASMIAELAGATVRKGIVSAGELDTSDVEVSSTLADVNRVLGTELSYADVEDVFRRLGFGLSGNADSFTVSVPRRRWDITIEADLFEEIARIYGYDRLPTSLPKDDGTAGELTVIQKLRRQVRTIAEGAGLTEIITYALTTPEKAVEFTAQPSNLTELMWPMTVDRSVLRQNMISGILDTVAYNVARKNKNLALYEIGKVFEQTGNPKEELPNEINSFAFALTGLVAEKDFQTAAVPVDFFYAKGILEALFTRLGLQVTYTATSEIVSLHPGRTAVISLGDQVLGFLGQVHPVTAKAYDIPETYVAELNLSAIEGALQPAVPFVEITKFPAVSRDVALLLKAEVTHQEVVDAIQAAGVKRLTDIKLFDVFSGEKLGLGMKSMAYSLTFQNPEDSLTDEEVARYMEKIQASLEEKVNAEVR</sequence>
<dbReference type="EC" id="6.1.1.20" evidence="1"/>
<dbReference type="EMBL" id="AE005672">
    <property type="protein sequence ID" value="AAK74735.1"/>
    <property type="molecule type" value="Genomic_DNA"/>
</dbReference>
<dbReference type="PIR" id="F95067">
    <property type="entry name" value="F95067"/>
</dbReference>
<dbReference type="RefSeq" id="WP_000961511.1">
    <property type="nucleotide sequence ID" value="NZ_CP155539.1"/>
</dbReference>
<dbReference type="SMR" id="Q97S34"/>
<dbReference type="BindingDB" id="Q97S34"/>
<dbReference type="PaxDb" id="170187-SP_0581"/>
<dbReference type="EnsemblBacteria" id="AAK74735">
    <property type="protein sequence ID" value="AAK74735"/>
    <property type="gene ID" value="SP_0581"/>
</dbReference>
<dbReference type="KEGG" id="spn:SP_0581"/>
<dbReference type="eggNOG" id="COG0072">
    <property type="taxonomic scope" value="Bacteria"/>
</dbReference>
<dbReference type="eggNOG" id="COG0073">
    <property type="taxonomic scope" value="Bacteria"/>
</dbReference>
<dbReference type="PhylomeDB" id="Q97S34"/>
<dbReference type="BioCyc" id="SPNE170187:G1FZB-600-MONOMER"/>
<dbReference type="Proteomes" id="UP000000585">
    <property type="component" value="Chromosome"/>
</dbReference>
<dbReference type="GO" id="GO:0009328">
    <property type="term" value="C:phenylalanine-tRNA ligase complex"/>
    <property type="evidence" value="ECO:0007669"/>
    <property type="project" value="TreeGrafter"/>
</dbReference>
<dbReference type="GO" id="GO:0005524">
    <property type="term" value="F:ATP binding"/>
    <property type="evidence" value="ECO:0007669"/>
    <property type="project" value="UniProtKB-UniRule"/>
</dbReference>
<dbReference type="GO" id="GO:0140096">
    <property type="term" value="F:catalytic activity, acting on a protein"/>
    <property type="evidence" value="ECO:0007669"/>
    <property type="project" value="UniProtKB-ARBA"/>
</dbReference>
<dbReference type="GO" id="GO:0000287">
    <property type="term" value="F:magnesium ion binding"/>
    <property type="evidence" value="ECO:0007669"/>
    <property type="project" value="UniProtKB-UniRule"/>
</dbReference>
<dbReference type="GO" id="GO:0004826">
    <property type="term" value="F:phenylalanine-tRNA ligase activity"/>
    <property type="evidence" value="ECO:0007669"/>
    <property type="project" value="UniProtKB-UniRule"/>
</dbReference>
<dbReference type="GO" id="GO:0016740">
    <property type="term" value="F:transferase activity"/>
    <property type="evidence" value="ECO:0007669"/>
    <property type="project" value="UniProtKB-ARBA"/>
</dbReference>
<dbReference type="GO" id="GO:0000049">
    <property type="term" value="F:tRNA binding"/>
    <property type="evidence" value="ECO:0007669"/>
    <property type="project" value="UniProtKB-KW"/>
</dbReference>
<dbReference type="GO" id="GO:0006432">
    <property type="term" value="P:phenylalanyl-tRNA aminoacylation"/>
    <property type="evidence" value="ECO:0007669"/>
    <property type="project" value="UniProtKB-UniRule"/>
</dbReference>
<dbReference type="CDD" id="cd00769">
    <property type="entry name" value="PheRS_beta_core"/>
    <property type="match status" value="1"/>
</dbReference>
<dbReference type="CDD" id="cd02796">
    <property type="entry name" value="tRNA_bind_bactPheRS"/>
    <property type="match status" value="1"/>
</dbReference>
<dbReference type="FunFam" id="2.40.50.140:FF:000045">
    <property type="entry name" value="Phenylalanine--tRNA ligase beta subunit"/>
    <property type="match status" value="1"/>
</dbReference>
<dbReference type="FunFam" id="3.30.56.10:FF:000002">
    <property type="entry name" value="Phenylalanine--tRNA ligase beta subunit"/>
    <property type="match status" value="1"/>
</dbReference>
<dbReference type="FunFam" id="3.30.70.380:FF:000001">
    <property type="entry name" value="Phenylalanine--tRNA ligase beta subunit"/>
    <property type="match status" value="1"/>
</dbReference>
<dbReference type="FunFam" id="3.30.930.10:FF:000022">
    <property type="entry name" value="Phenylalanine--tRNA ligase beta subunit"/>
    <property type="match status" value="1"/>
</dbReference>
<dbReference type="FunFam" id="3.50.40.10:FF:000001">
    <property type="entry name" value="Phenylalanine--tRNA ligase beta subunit"/>
    <property type="match status" value="1"/>
</dbReference>
<dbReference type="Gene3D" id="3.30.56.10">
    <property type="match status" value="2"/>
</dbReference>
<dbReference type="Gene3D" id="3.30.930.10">
    <property type="entry name" value="Bira Bifunctional Protein, Domain 2"/>
    <property type="match status" value="1"/>
</dbReference>
<dbReference type="Gene3D" id="3.30.70.380">
    <property type="entry name" value="Ferrodoxin-fold anticodon-binding domain"/>
    <property type="match status" value="1"/>
</dbReference>
<dbReference type="Gene3D" id="2.40.50.140">
    <property type="entry name" value="Nucleic acid-binding proteins"/>
    <property type="match status" value="1"/>
</dbReference>
<dbReference type="Gene3D" id="3.50.40.10">
    <property type="entry name" value="Phenylalanyl-trna Synthetase, Chain B, domain 3"/>
    <property type="match status" value="1"/>
</dbReference>
<dbReference type="HAMAP" id="MF_00283">
    <property type="entry name" value="Phe_tRNA_synth_beta1"/>
    <property type="match status" value="1"/>
</dbReference>
<dbReference type="InterPro" id="IPR045864">
    <property type="entry name" value="aa-tRNA-synth_II/BPL/LPL"/>
</dbReference>
<dbReference type="InterPro" id="IPR005146">
    <property type="entry name" value="B3/B4_tRNA-bd"/>
</dbReference>
<dbReference type="InterPro" id="IPR009061">
    <property type="entry name" value="DNA-bd_dom_put_sf"/>
</dbReference>
<dbReference type="InterPro" id="IPR005121">
    <property type="entry name" value="Fdx_antiC-bd"/>
</dbReference>
<dbReference type="InterPro" id="IPR036690">
    <property type="entry name" value="Fdx_antiC-bd_sf"/>
</dbReference>
<dbReference type="InterPro" id="IPR012340">
    <property type="entry name" value="NA-bd_OB-fold"/>
</dbReference>
<dbReference type="InterPro" id="IPR045060">
    <property type="entry name" value="Phe-tRNA-ligase_IIc_bsu"/>
</dbReference>
<dbReference type="InterPro" id="IPR004532">
    <property type="entry name" value="Phe-tRNA-ligase_IIc_bsu_bact"/>
</dbReference>
<dbReference type="InterPro" id="IPR020825">
    <property type="entry name" value="Phe-tRNA_synthase-like_B3/B4"/>
</dbReference>
<dbReference type="InterPro" id="IPR041616">
    <property type="entry name" value="PheRS_beta_core"/>
</dbReference>
<dbReference type="InterPro" id="IPR002547">
    <property type="entry name" value="tRNA-bd_dom"/>
</dbReference>
<dbReference type="InterPro" id="IPR033714">
    <property type="entry name" value="tRNA_bind_bactPheRS"/>
</dbReference>
<dbReference type="InterPro" id="IPR005147">
    <property type="entry name" value="tRNA_synthase_B5-dom"/>
</dbReference>
<dbReference type="NCBIfam" id="TIGR00472">
    <property type="entry name" value="pheT_bact"/>
    <property type="match status" value="1"/>
</dbReference>
<dbReference type="NCBIfam" id="NF045760">
    <property type="entry name" value="YtpR"/>
    <property type="match status" value="1"/>
</dbReference>
<dbReference type="PANTHER" id="PTHR10947:SF0">
    <property type="entry name" value="PHENYLALANINE--TRNA LIGASE BETA SUBUNIT"/>
    <property type="match status" value="1"/>
</dbReference>
<dbReference type="PANTHER" id="PTHR10947">
    <property type="entry name" value="PHENYLALANYL-TRNA SYNTHETASE BETA CHAIN AND LEUCINE-RICH REPEAT-CONTAINING PROTEIN 47"/>
    <property type="match status" value="1"/>
</dbReference>
<dbReference type="Pfam" id="PF03483">
    <property type="entry name" value="B3_4"/>
    <property type="match status" value="1"/>
</dbReference>
<dbReference type="Pfam" id="PF03484">
    <property type="entry name" value="B5"/>
    <property type="match status" value="1"/>
</dbReference>
<dbReference type="Pfam" id="PF03147">
    <property type="entry name" value="FDX-ACB"/>
    <property type="match status" value="1"/>
</dbReference>
<dbReference type="Pfam" id="PF01588">
    <property type="entry name" value="tRNA_bind"/>
    <property type="match status" value="1"/>
</dbReference>
<dbReference type="Pfam" id="PF17759">
    <property type="entry name" value="tRNA_synthFbeta"/>
    <property type="match status" value="1"/>
</dbReference>
<dbReference type="SMART" id="SM00873">
    <property type="entry name" value="B3_4"/>
    <property type="match status" value="1"/>
</dbReference>
<dbReference type="SMART" id="SM00874">
    <property type="entry name" value="B5"/>
    <property type="match status" value="1"/>
</dbReference>
<dbReference type="SMART" id="SM00896">
    <property type="entry name" value="FDX-ACB"/>
    <property type="match status" value="1"/>
</dbReference>
<dbReference type="SUPFAM" id="SSF54991">
    <property type="entry name" value="Anticodon-binding domain of PheRS"/>
    <property type="match status" value="1"/>
</dbReference>
<dbReference type="SUPFAM" id="SSF55681">
    <property type="entry name" value="Class II aaRS and biotin synthetases"/>
    <property type="match status" value="1"/>
</dbReference>
<dbReference type="SUPFAM" id="SSF50249">
    <property type="entry name" value="Nucleic acid-binding proteins"/>
    <property type="match status" value="1"/>
</dbReference>
<dbReference type="SUPFAM" id="SSF56037">
    <property type="entry name" value="PheT/TilS domain"/>
    <property type="match status" value="1"/>
</dbReference>
<dbReference type="SUPFAM" id="SSF46955">
    <property type="entry name" value="Putative DNA-binding domain"/>
    <property type="match status" value="1"/>
</dbReference>
<dbReference type="PROSITE" id="PS51483">
    <property type="entry name" value="B5"/>
    <property type="match status" value="1"/>
</dbReference>
<dbReference type="PROSITE" id="PS51447">
    <property type="entry name" value="FDX_ACB"/>
    <property type="match status" value="1"/>
</dbReference>
<dbReference type="PROSITE" id="PS50886">
    <property type="entry name" value="TRBD"/>
    <property type="match status" value="1"/>
</dbReference>
<comment type="catalytic activity">
    <reaction evidence="1">
        <text>tRNA(Phe) + L-phenylalanine + ATP = L-phenylalanyl-tRNA(Phe) + AMP + diphosphate + H(+)</text>
        <dbReference type="Rhea" id="RHEA:19413"/>
        <dbReference type="Rhea" id="RHEA-COMP:9668"/>
        <dbReference type="Rhea" id="RHEA-COMP:9699"/>
        <dbReference type="ChEBI" id="CHEBI:15378"/>
        <dbReference type="ChEBI" id="CHEBI:30616"/>
        <dbReference type="ChEBI" id="CHEBI:33019"/>
        <dbReference type="ChEBI" id="CHEBI:58095"/>
        <dbReference type="ChEBI" id="CHEBI:78442"/>
        <dbReference type="ChEBI" id="CHEBI:78531"/>
        <dbReference type="ChEBI" id="CHEBI:456215"/>
        <dbReference type="EC" id="6.1.1.20"/>
    </reaction>
</comment>
<comment type="cofactor">
    <cofactor evidence="1">
        <name>Mg(2+)</name>
        <dbReference type="ChEBI" id="CHEBI:18420"/>
    </cofactor>
    <text evidence="1">Binds 2 magnesium ions per tetramer.</text>
</comment>
<comment type="subunit">
    <text evidence="1">Tetramer of two alpha and two beta subunits.</text>
</comment>
<comment type="subcellular location">
    <subcellularLocation>
        <location>Cytoplasm</location>
    </subcellularLocation>
</comment>
<comment type="similarity">
    <text evidence="1">Belongs to the phenylalanyl-tRNA synthetase beta subunit family. Type 1 subfamily.</text>
</comment>
<gene>
    <name evidence="1" type="primary">pheT</name>
    <name type="ordered locus">SP_0581</name>
</gene>
<reference key="1">
    <citation type="journal article" date="2001" name="Science">
        <title>Complete genome sequence of a virulent isolate of Streptococcus pneumoniae.</title>
        <authorList>
            <person name="Tettelin H."/>
            <person name="Nelson K.E."/>
            <person name="Paulsen I.T."/>
            <person name="Eisen J.A."/>
            <person name="Read T.D."/>
            <person name="Peterson S.N."/>
            <person name="Heidelberg J.F."/>
            <person name="DeBoy R.T."/>
            <person name="Haft D.H."/>
            <person name="Dodson R.J."/>
            <person name="Durkin A.S."/>
            <person name="Gwinn M.L."/>
            <person name="Kolonay J.F."/>
            <person name="Nelson W.C."/>
            <person name="Peterson J.D."/>
            <person name="Umayam L.A."/>
            <person name="White O."/>
            <person name="Salzberg S.L."/>
            <person name="Lewis M.R."/>
            <person name="Radune D."/>
            <person name="Holtzapple E.K."/>
            <person name="Khouri H.M."/>
            <person name="Wolf A.M."/>
            <person name="Utterback T.R."/>
            <person name="Hansen C.L."/>
            <person name="McDonald L.A."/>
            <person name="Feldblyum T.V."/>
            <person name="Angiuoli S.V."/>
            <person name="Dickinson T."/>
            <person name="Hickey E.K."/>
            <person name="Holt I.E."/>
            <person name="Loftus B.J."/>
            <person name="Yang F."/>
            <person name="Smith H.O."/>
            <person name="Venter J.C."/>
            <person name="Dougherty B.A."/>
            <person name="Morrison D.A."/>
            <person name="Hollingshead S.K."/>
            <person name="Fraser C.M."/>
        </authorList>
    </citation>
    <scope>NUCLEOTIDE SEQUENCE [LARGE SCALE GENOMIC DNA]</scope>
    <source>
        <strain>ATCC BAA-334 / TIGR4</strain>
    </source>
</reference>
<protein>
    <recommendedName>
        <fullName evidence="1">Phenylalanine--tRNA ligase beta subunit</fullName>
        <ecNumber evidence="1">6.1.1.20</ecNumber>
    </recommendedName>
    <alternativeName>
        <fullName evidence="1">Phenylalanyl-tRNA synthetase beta subunit</fullName>
        <shortName evidence="1">PheRS</shortName>
    </alternativeName>
</protein>
<keyword id="KW-0030">Aminoacyl-tRNA synthetase</keyword>
<keyword id="KW-0067">ATP-binding</keyword>
<keyword id="KW-0963">Cytoplasm</keyword>
<keyword id="KW-0436">Ligase</keyword>
<keyword id="KW-0460">Magnesium</keyword>
<keyword id="KW-0479">Metal-binding</keyword>
<keyword id="KW-0547">Nucleotide-binding</keyword>
<keyword id="KW-0648">Protein biosynthesis</keyword>
<keyword id="KW-1185">Reference proteome</keyword>
<keyword id="KW-0694">RNA-binding</keyword>
<keyword id="KW-0820">tRNA-binding</keyword>
<proteinExistence type="inferred from homology"/>
<feature type="chain" id="PRO_0000126962" description="Phenylalanine--tRNA ligase beta subunit">
    <location>
        <begin position="1"/>
        <end position="801"/>
    </location>
</feature>
<feature type="domain" description="tRNA-binding" evidence="1">
    <location>
        <begin position="39"/>
        <end position="153"/>
    </location>
</feature>
<feature type="domain" description="B5" evidence="1">
    <location>
        <begin position="406"/>
        <end position="481"/>
    </location>
</feature>
<feature type="domain" description="FDX-ACB" evidence="1">
    <location>
        <begin position="708"/>
        <end position="801"/>
    </location>
</feature>
<feature type="binding site" evidence="1">
    <location>
        <position position="459"/>
    </location>
    <ligand>
        <name>Mg(2+)</name>
        <dbReference type="ChEBI" id="CHEBI:18420"/>
        <note>shared with alpha subunit</note>
    </ligand>
</feature>
<feature type="binding site" evidence="1">
    <location>
        <position position="465"/>
    </location>
    <ligand>
        <name>Mg(2+)</name>
        <dbReference type="ChEBI" id="CHEBI:18420"/>
        <note>shared with alpha subunit</note>
    </ligand>
</feature>
<feature type="binding site" evidence="1">
    <location>
        <position position="468"/>
    </location>
    <ligand>
        <name>Mg(2+)</name>
        <dbReference type="ChEBI" id="CHEBI:18420"/>
        <note>shared with alpha subunit</note>
    </ligand>
</feature>
<feature type="binding site" evidence="1">
    <location>
        <position position="469"/>
    </location>
    <ligand>
        <name>Mg(2+)</name>
        <dbReference type="ChEBI" id="CHEBI:18420"/>
        <note>shared with alpha subunit</note>
    </ligand>
</feature>
<accession>Q97S34</accession>